<comment type="function">
    <text>Probable guanine nucleotide exchange factor.</text>
</comment>
<comment type="subunit">
    <text>Interacts with Ras.</text>
</comment>
<reference key="1">
    <citation type="journal article" date="1994" name="Mol. Cell. Biol.">
        <title>ralGDS family members interact with the effector loop of ras p21.</title>
        <authorList>
            <person name="Kikuchi A."/>
            <person name="Demo S.D."/>
            <person name="Ye Z.H."/>
            <person name="Chen Y.W."/>
            <person name="Williams L.T."/>
        </authorList>
    </citation>
    <scope>NUCLEOTIDE SEQUENCE [MRNA]</scope>
</reference>
<reference key="2">
    <citation type="journal article" date="2005" name="Science">
        <title>The transcriptional landscape of the mammalian genome.</title>
        <authorList>
            <person name="Carninci P."/>
            <person name="Kasukawa T."/>
            <person name="Katayama S."/>
            <person name="Gough J."/>
            <person name="Frith M.C."/>
            <person name="Maeda N."/>
            <person name="Oyama R."/>
            <person name="Ravasi T."/>
            <person name="Lenhard B."/>
            <person name="Wells C."/>
            <person name="Kodzius R."/>
            <person name="Shimokawa K."/>
            <person name="Bajic V.B."/>
            <person name="Brenner S.E."/>
            <person name="Batalov S."/>
            <person name="Forrest A.R."/>
            <person name="Zavolan M."/>
            <person name="Davis M.J."/>
            <person name="Wilming L.G."/>
            <person name="Aidinis V."/>
            <person name="Allen J.E."/>
            <person name="Ambesi-Impiombato A."/>
            <person name="Apweiler R."/>
            <person name="Aturaliya R.N."/>
            <person name="Bailey T.L."/>
            <person name="Bansal M."/>
            <person name="Baxter L."/>
            <person name="Beisel K.W."/>
            <person name="Bersano T."/>
            <person name="Bono H."/>
            <person name="Chalk A.M."/>
            <person name="Chiu K.P."/>
            <person name="Choudhary V."/>
            <person name="Christoffels A."/>
            <person name="Clutterbuck D.R."/>
            <person name="Crowe M.L."/>
            <person name="Dalla E."/>
            <person name="Dalrymple B.P."/>
            <person name="de Bono B."/>
            <person name="Della Gatta G."/>
            <person name="di Bernardo D."/>
            <person name="Down T."/>
            <person name="Engstrom P."/>
            <person name="Fagiolini M."/>
            <person name="Faulkner G."/>
            <person name="Fletcher C.F."/>
            <person name="Fukushima T."/>
            <person name="Furuno M."/>
            <person name="Futaki S."/>
            <person name="Gariboldi M."/>
            <person name="Georgii-Hemming P."/>
            <person name="Gingeras T.R."/>
            <person name="Gojobori T."/>
            <person name="Green R.E."/>
            <person name="Gustincich S."/>
            <person name="Harbers M."/>
            <person name="Hayashi Y."/>
            <person name="Hensch T.K."/>
            <person name="Hirokawa N."/>
            <person name="Hill D."/>
            <person name="Huminiecki L."/>
            <person name="Iacono M."/>
            <person name="Ikeo K."/>
            <person name="Iwama A."/>
            <person name="Ishikawa T."/>
            <person name="Jakt M."/>
            <person name="Kanapin A."/>
            <person name="Katoh M."/>
            <person name="Kawasawa Y."/>
            <person name="Kelso J."/>
            <person name="Kitamura H."/>
            <person name="Kitano H."/>
            <person name="Kollias G."/>
            <person name="Krishnan S.P."/>
            <person name="Kruger A."/>
            <person name="Kummerfeld S.K."/>
            <person name="Kurochkin I.V."/>
            <person name="Lareau L.F."/>
            <person name="Lazarevic D."/>
            <person name="Lipovich L."/>
            <person name="Liu J."/>
            <person name="Liuni S."/>
            <person name="McWilliam S."/>
            <person name="Madan Babu M."/>
            <person name="Madera M."/>
            <person name="Marchionni L."/>
            <person name="Matsuda H."/>
            <person name="Matsuzawa S."/>
            <person name="Miki H."/>
            <person name="Mignone F."/>
            <person name="Miyake S."/>
            <person name="Morris K."/>
            <person name="Mottagui-Tabar S."/>
            <person name="Mulder N."/>
            <person name="Nakano N."/>
            <person name="Nakauchi H."/>
            <person name="Ng P."/>
            <person name="Nilsson R."/>
            <person name="Nishiguchi S."/>
            <person name="Nishikawa S."/>
            <person name="Nori F."/>
            <person name="Ohara O."/>
            <person name="Okazaki Y."/>
            <person name="Orlando V."/>
            <person name="Pang K.C."/>
            <person name="Pavan W.J."/>
            <person name="Pavesi G."/>
            <person name="Pesole G."/>
            <person name="Petrovsky N."/>
            <person name="Piazza S."/>
            <person name="Reed J."/>
            <person name="Reid J.F."/>
            <person name="Ring B.Z."/>
            <person name="Ringwald M."/>
            <person name="Rost B."/>
            <person name="Ruan Y."/>
            <person name="Salzberg S.L."/>
            <person name="Sandelin A."/>
            <person name="Schneider C."/>
            <person name="Schoenbach C."/>
            <person name="Sekiguchi K."/>
            <person name="Semple C.A."/>
            <person name="Seno S."/>
            <person name="Sessa L."/>
            <person name="Sheng Y."/>
            <person name="Shibata Y."/>
            <person name="Shimada H."/>
            <person name="Shimada K."/>
            <person name="Silva D."/>
            <person name="Sinclair B."/>
            <person name="Sperling S."/>
            <person name="Stupka E."/>
            <person name="Sugiura K."/>
            <person name="Sultana R."/>
            <person name="Takenaka Y."/>
            <person name="Taki K."/>
            <person name="Tammoja K."/>
            <person name="Tan S.L."/>
            <person name="Tang S."/>
            <person name="Taylor M.S."/>
            <person name="Tegner J."/>
            <person name="Teichmann S.A."/>
            <person name="Ueda H.R."/>
            <person name="van Nimwegen E."/>
            <person name="Verardo R."/>
            <person name="Wei C.L."/>
            <person name="Yagi K."/>
            <person name="Yamanishi H."/>
            <person name="Zabarovsky E."/>
            <person name="Zhu S."/>
            <person name="Zimmer A."/>
            <person name="Hide W."/>
            <person name="Bult C."/>
            <person name="Grimmond S.M."/>
            <person name="Teasdale R.D."/>
            <person name="Liu E.T."/>
            <person name="Brusic V."/>
            <person name="Quackenbush J."/>
            <person name="Wahlestedt C."/>
            <person name="Mattick J.S."/>
            <person name="Hume D.A."/>
            <person name="Kai C."/>
            <person name="Sasaki D."/>
            <person name="Tomaru Y."/>
            <person name="Fukuda S."/>
            <person name="Kanamori-Katayama M."/>
            <person name="Suzuki M."/>
            <person name="Aoki J."/>
            <person name="Arakawa T."/>
            <person name="Iida J."/>
            <person name="Imamura K."/>
            <person name="Itoh M."/>
            <person name="Kato T."/>
            <person name="Kawaji H."/>
            <person name="Kawagashira N."/>
            <person name="Kawashima T."/>
            <person name="Kojima M."/>
            <person name="Kondo S."/>
            <person name="Konno H."/>
            <person name="Nakano K."/>
            <person name="Ninomiya N."/>
            <person name="Nishio T."/>
            <person name="Okada M."/>
            <person name="Plessy C."/>
            <person name="Shibata K."/>
            <person name="Shiraki T."/>
            <person name="Suzuki S."/>
            <person name="Tagami M."/>
            <person name="Waki K."/>
            <person name="Watahiki A."/>
            <person name="Okamura-Oho Y."/>
            <person name="Suzuki H."/>
            <person name="Kawai J."/>
            <person name="Hayashizaki Y."/>
        </authorList>
    </citation>
    <scope>NUCLEOTIDE SEQUENCE [LARGE SCALE MRNA]</scope>
    <source>
        <strain>C57BL/6J</strain>
        <tissue>Amnion</tissue>
    </source>
</reference>
<reference key="3">
    <citation type="submission" date="2005-09" db="EMBL/GenBank/DDBJ databases">
        <authorList>
            <person name="Mural R.J."/>
            <person name="Adams M.D."/>
            <person name="Myers E.W."/>
            <person name="Smith H.O."/>
            <person name="Venter J.C."/>
        </authorList>
    </citation>
    <scope>NUCLEOTIDE SEQUENCE [LARGE SCALE GENOMIC DNA]</scope>
</reference>
<reference key="4">
    <citation type="journal article" date="2004" name="Genome Res.">
        <title>The status, quality, and expansion of the NIH full-length cDNA project: the Mammalian Gene Collection (MGC).</title>
        <authorList>
            <consortium name="The MGC Project Team"/>
        </authorList>
    </citation>
    <scope>NUCLEOTIDE SEQUENCE [LARGE SCALE MRNA]</scope>
    <source>
        <strain>FVB/N</strain>
        <tissue>Kidney</tissue>
    </source>
</reference>
<reference key="5">
    <citation type="journal article" date="2009" name="Immunity">
        <title>The phagosomal proteome in interferon-gamma-activated macrophages.</title>
        <authorList>
            <person name="Trost M."/>
            <person name="English L."/>
            <person name="Lemieux S."/>
            <person name="Courcelles M."/>
            <person name="Desjardins M."/>
            <person name="Thibault P."/>
        </authorList>
    </citation>
    <scope>IDENTIFICATION BY MASS SPECTROMETRY [LARGE SCALE ANALYSIS]</scope>
</reference>
<reference key="6">
    <citation type="journal article" date="2010" name="Cell">
        <title>A tissue-specific atlas of mouse protein phosphorylation and expression.</title>
        <authorList>
            <person name="Huttlin E.L."/>
            <person name="Jedrychowski M.P."/>
            <person name="Elias J.E."/>
            <person name="Goswami T."/>
            <person name="Rad R."/>
            <person name="Beausoleil S.A."/>
            <person name="Villen J."/>
            <person name="Haas W."/>
            <person name="Sowa M.E."/>
            <person name="Gygi S.P."/>
        </authorList>
    </citation>
    <scope>PHOSPHORYLATION [LARGE SCALE ANALYSIS] AT SER-520</scope>
    <scope>IDENTIFICATION BY MASS SPECTROMETRY [LARGE SCALE ANALYSIS]</scope>
    <source>
        <tissue>Brain</tissue>
        <tissue>Brown adipose tissue</tissue>
        <tissue>Kidney</tissue>
        <tissue>Liver</tissue>
        <tissue>Lung</tissue>
        <tissue>Pancreas</tissue>
        <tissue>Spleen</tissue>
        <tissue>Testis</tissue>
    </source>
</reference>
<reference key="7">
    <citation type="journal article" date="1998" name="FEBS Lett.">
        <title>Solution structure of the Ras-binding domain of RGL.</title>
        <authorList>
            <person name="Kigawa T."/>
            <person name="Endo M."/>
            <person name="Ito Y."/>
            <person name="Shirouzu M."/>
            <person name="Kikuchi A."/>
            <person name="Yokoyama S."/>
        </authorList>
    </citation>
    <scope>STRUCTURE BY NMR OF 632-734</scope>
</reference>
<keyword id="KW-0002">3D-structure</keyword>
<keyword id="KW-0344">Guanine-nucleotide releasing factor</keyword>
<keyword id="KW-0597">Phosphoprotein</keyword>
<keyword id="KW-1185">Reference proteome</keyword>
<sequence>MKLLWQAKMSSIQDWGEEVEEGAVYHVTLKRVQIQQAANKGARWLGVEGDQLPPGHTVSQYETCKIRTIKAGTLEKLVENLLTAFGDNDFTYISIFLSTYRGFASTKEVLELLLDRYGNLTGPNCEDDGSQSSPESKAVIRNAIASILRAWLDQCAEDFREPPHFPCLQKLLEYLKQMMPGSDPERRAQNLLEQFQKQDVDSDNGLLNTSSFSLEEEEELESGGSAEFTNFSEDLVAEQLTYMDAQLFKKVVPHHCLGCIWSQRDKKENKHLAPTIRATISQFNTLTKCVVSTVLGSKELKTQQRARVIEKWINIAHECRILKNFSSLRAIVSALQSNSIYRLKKAWAAVPKDRMLMFEELSDIFSDHNNHLTSRELLMKEGTSKFANLDSSVKENQKRTQRRLQLQKDMGVMQGTVPYLGTFLTDLTMLDTALQDYIEGGLINFEKRRREFEVIAQIKLLQSACNSYCMGPDQKFIQWFQRQQLLSEEESYALSCEIEAAADANTTSPKPRKSMVKRLSLLFLGSDIIPGSTPTKEQPKSAASGSSGESMDSVSVSSCESNHSEAEEGPVTPMDTPDEPQKKLSESSSSCSSIHSMDTNSSGMSSLINPLSSPPTCNNNPKIHKRSVSVTSITSTVLPPVYNQQNEDTCIIRISVEDNNGNMYKSIMLTSQDKTPAVIQRAMSKHNLESDPAEEYELVQVISEDKELVIPDSANVFYAMNSQVNFDFILRKKNSVEEQVKLRSRTSLTLPRTAKRGCWSNRHSKITL</sequence>
<proteinExistence type="evidence at protein level"/>
<feature type="chain" id="PRO_0000068886" description="Ral guanine nucleotide dissociation stimulator-like 1">
    <location>
        <begin position="1"/>
        <end position="768"/>
    </location>
</feature>
<feature type="domain" description="N-terminal Ras-GEF" evidence="1">
    <location>
        <begin position="65"/>
        <end position="196"/>
    </location>
</feature>
<feature type="domain" description="Ras-GEF" evidence="3">
    <location>
        <begin position="232"/>
        <end position="501"/>
    </location>
</feature>
<feature type="domain" description="Ras-associating" evidence="2">
    <location>
        <begin position="648"/>
        <end position="735"/>
    </location>
</feature>
<feature type="region of interest" description="Disordered" evidence="4">
    <location>
        <begin position="530"/>
        <end position="623"/>
    </location>
</feature>
<feature type="compositionally biased region" description="Low complexity" evidence="4">
    <location>
        <begin position="541"/>
        <end position="561"/>
    </location>
</feature>
<feature type="compositionally biased region" description="Low complexity" evidence="4">
    <location>
        <begin position="586"/>
        <end position="596"/>
    </location>
</feature>
<feature type="compositionally biased region" description="Polar residues" evidence="4">
    <location>
        <begin position="597"/>
        <end position="621"/>
    </location>
</feature>
<feature type="modified residue" description="Phosphoserine" evidence="6">
    <location>
        <position position="520"/>
    </location>
</feature>
<feature type="sequence conflict" description="In Ref. 1; AAA64950." evidence="5" ref="1">
    <original>N</original>
    <variation>H</variation>
    <location>
        <position position="662"/>
    </location>
</feature>
<feature type="strand" evidence="7">
    <location>
        <begin position="652"/>
        <end position="658"/>
    </location>
</feature>
<feature type="helix" evidence="7">
    <location>
        <begin position="676"/>
        <end position="682"/>
    </location>
</feature>
<feature type="turn" evidence="7">
    <location>
        <begin position="683"/>
        <end position="687"/>
    </location>
</feature>
<feature type="strand" evidence="7">
    <location>
        <begin position="692"/>
        <end position="701"/>
    </location>
</feature>
<feature type="strand" evidence="7">
    <location>
        <begin position="703"/>
        <end position="705"/>
    </location>
</feature>
<feature type="strand" evidence="7">
    <location>
        <begin position="708"/>
        <end position="711"/>
    </location>
</feature>
<feature type="turn" evidence="7">
    <location>
        <begin position="716"/>
        <end position="720"/>
    </location>
</feature>
<feature type="strand" evidence="7">
    <location>
        <begin position="726"/>
        <end position="732"/>
    </location>
</feature>
<protein>
    <recommendedName>
        <fullName>Ral guanine nucleotide dissociation stimulator-like 1</fullName>
        <shortName>RalGDS-like 1</shortName>
    </recommendedName>
</protein>
<name>RGL1_MOUSE</name>
<evidence type="ECO:0000255" key="1">
    <source>
        <dbReference type="PROSITE-ProRule" id="PRU00135"/>
    </source>
</evidence>
<evidence type="ECO:0000255" key="2">
    <source>
        <dbReference type="PROSITE-ProRule" id="PRU00166"/>
    </source>
</evidence>
<evidence type="ECO:0000255" key="3">
    <source>
        <dbReference type="PROSITE-ProRule" id="PRU00168"/>
    </source>
</evidence>
<evidence type="ECO:0000256" key="4">
    <source>
        <dbReference type="SAM" id="MobiDB-lite"/>
    </source>
</evidence>
<evidence type="ECO:0000305" key="5"/>
<evidence type="ECO:0007744" key="6">
    <source>
    </source>
</evidence>
<evidence type="ECO:0007829" key="7">
    <source>
        <dbReference type="PDB" id="1EF5"/>
    </source>
</evidence>
<gene>
    <name type="primary">Rgl1</name>
    <name type="synonym">Rgl</name>
</gene>
<organism>
    <name type="scientific">Mus musculus</name>
    <name type="common">Mouse</name>
    <dbReference type="NCBI Taxonomy" id="10090"/>
    <lineage>
        <taxon>Eukaryota</taxon>
        <taxon>Metazoa</taxon>
        <taxon>Chordata</taxon>
        <taxon>Craniata</taxon>
        <taxon>Vertebrata</taxon>
        <taxon>Euteleostomi</taxon>
        <taxon>Mammalia</taxon>
        <taxon>Eutheria</taxon>
        <taxon>Euarchontoglires</taxon>
        <taxon>Glires</taxon>
        <taxon>Rodentia</taxon>
        <taxon>Myomorpha</taxon>
        <taxon>Muroidea</taxon>
        <taxon>Muridae</taxon>
        <taxon>Murinae</taxon>
        <taxon>Mus</taxon>
        <taxon>Mus</taxon>
    </lineage>
</organism>
<accession>Q60695</accession>
<accession>Q8VD09</accession>
<dbReference type="EMBL" id="U14103">
    <property type="protein sequence ID" value="AAA64950.1"/>
    <property type="molecule type" value="mRNA"/>
</dbReference>
<dbReference type="EMBL" id="AK144218">
    <property type="protein sequence ID" value="BAE25780.1"/>
    <property type="molecule type" value="mRNA"/>
</dbReference>
<dbReference type="EMBL" id="AK169109">
    <property type="protein sequence ID" value="BAE40891.1"/>
    <property type="molecule type" value="mRNA"/>
</dbReference>
<dbReference type="EMBL" id="AK169180">
    <property type="protein sequence ID" value="BAE40958.1"/>
    <property type="molecule type" value="mRNA"/>
</dbReference>
<dbReference type="EMBL" id="CH466520">
    <property type="protein sequence ID" value="EDL39452.1"/>
    <property type="molecule type" value="Genomic_DNA"/>
</dbReference>
<dbReference type="EMBL" id="BC017678">
    <property type="protein sequence ID" value="AAH17678.1"/>
    <property type="molecule type" value="mRNA"/>
</dbReference>
<dbReference type="CCDS" id="CCDS15365.1"/>
<dbReference type="PIR" id="A56234">
    <property type="entry name" value="A56234"/>
</dbReference>
<dbReference type="RefSeq" id="NP_001333046.1">
    <property type="nucleotide sequence ID" value="NM_001346117.1"/>
</dbReference>
<dbReference type="RefSeq" id="NP_001333047.1">
    <property type="nucleotide sequence ID" value="NM_001346118.1"/>
</dbReference>
<dbReference type="RefSeq" id="NP_001333048.1">
    <property type="nucleotide sequence ID" value="NM_001346119.1"/>
</dbReference>
<dbReference type="RefSeq" id="NP_058542.2">
    <property type="nucleotide sequence ID" value="NM_016846.4"/>
</dbReference>
<dbReference type="PDB" id="1EF5">
    <property type="method" value="NMR"/>
    <property type="chains" value="A=632-734"/>
</dbReference>
<dbReference type="PDBsum" id="1EF5"/>
<dbReference type="SMR" id="Q60695"/>
<dbReference type="BioGRID" id="202879">
    <property type="interactions" value="4"/>
</dbReference>
<dbReference type="FunCoup" id="Q60695">
    <property type="interactions" value="1008"/>
</dbReference>
<dbReference type="STRING" id="10090.ENSMUSP00000027760"/>
<dbReference type="iPTMnet" id="Q60695"/>
<dbReference type="PhosphoSitePlus" id="Q60695"/>
<dbReference type="jPOST" id="Q60695"/>
<dbReference type="PaxDb" id="10090-ENSMUSP00000027760"/>
<dbReference type="ProteomicsDB" id="253257"/>
<dbReference type="Pumba" id="Q60695"/>
<dbReference type="Antibodypedia" id="20603">
    <property type="antibodies" value="138 antibodies from 28 providers"/>
</dbReference>
<dbReference type="DNASU" id="19731"/>
<dbReference type="Ensembl" id="ENSMUST00000027760.14">
    <property type="protein sequence ID" value="ENSMUSP00000027760.8"/>
    <property type="gene ID" value="ENSMUSG00000026482.14"/>
</dbReference>
<dbReference type="GeneID" id="19731"/>
<dbReference type="KEGG" id="mmu:19731"/>
<dbReference type="UCSC" id="uc007czh.1">
    <property type="organism name" value="mouse"/>
</dbReference>
<dbReference type="AGR" id="MGI:107484"/>
<dbReference type="CTD" id="23179"/>
<dbReference type="MGI" id="MGI:107484">
    <property type="gene designation" value="Rgl1"/>
</dbReference>
<dbReference type="VEuPathDB" id="HostDB:ENSMUSG00000026482"/>
<dbReference type="eggNOG" id="KOG3629">
    <property type="taxonomic scope" value="Eukaryota"/>
</dbReference>
<dbReference type="GeneTree" id="ENSGT00940000156012"/>
<dbReference type="HOGENOM" id="CLU_010252_0_1_1"/>
<dbReference type="InParanoid" id="Q60695"/>
<dbReference type="OMA" id="DSCMVYD"/>
<dbReference type="OrthoDB" id="26687at2759"/>
<dbReference type="TreeFam" id="TF315204"/>
<dbReference type="Reactome" id="R-MMU-5673001">
    <property type="pathway name" value="RAF/MAP kinase cascade"/>
</dbReference>
<dbReference type="BioGRID-ORCS" id="19731">
    <property type="hits" value="3 hits in 76 CRISPR screens"/>
</dbReference>
<dbReference type="ChiTaRS" id="Rgl1">
    <property type="organism name" value="mouse"/>
</dbReference>
<dbReference type="EvolutionaryTrace" id="Q60695"/>
<dbReference type="PRO" id="PR:Q60695"/>
<dbReference type="Proteomes" id="UP000000589">
    <property type="component" value="Chromosome 1"/>
</dbReference>
<dbReference type="RNAct" id="Q60695">
    <property type="molecule type" value="protein"/>
</dbReference>
<dbReference type="Bgee" id="ENSMUSG00000026482">
    <property type="expression patterns" value="Expressed in right kidney and 223 other cell types or tissues"/>
</dbReference>
<dbReference type="ExpressionAtlas" id="Q60695">
    <property type="expression patterns" value="baseline and differential"/>
</dbReference>
<dbReference type="GO" id="GO:0005085">
    <property type="term" value="F:guanyl-nucleotide exchange factor activity"/>
    <property type="evidence" value="ECO:0007669"/>
    <property type="project" value="UniProtKB-KW"/>
</dbReference>
<dbReference type="GO" id="GO:0007264">
    <property type="term" value="P:small GTPase-mediated signal transduction"/>
    <property type="evidence" value="ECO:0007669"/>
    <property type="project" value="InterPro"/>
</dbReference>
<dbReference type="CDD" id="cd17210">
    <property type="entry name" value="RA_RGL"/>
    <property type="match status" value="1"/>
</dbReference>
<dbReference type="CDD" id="cd00155">
    <property type="entry name" value="RasGEF"/>
    <property type="match status" value="1"/>
</dbReference>
<dbReference type="CDD" id="cd06224">
    <property type="entry name" value="REM"/>
    <property type="match status" value="1"/>
</dbReference>
<dbReference type="FunFam" id="1.10.840.10:FF:000005">
    <property type="entry name" value="Ral guanine nucleotide dissociation stimulator isoform 1"/>
    <property type="match status" value="1"/>
</dbReference>
<dbReference type="FunFam" id="1.20.870.10:FF:000003">
    <property type="entry name" value="Ral guanine nucleotide dissociation stimulator isoform 1"/>
    <property type="match status" value="1"/>
</dbReference>
<dbReference type="FunFam" id="3.10.20.90:FF:000042">
    <property type="entry name" value="Ral guanine nucleotide dissociation stimulator isoform 1"/>
    <property type="match status" value="1"/>
</dbReference>
<dbReference type="Gene3D" id="3.10.20.90">
    <property type="entry name" value="Phosphatidylinositol 3-kinase Catalytic Subunit, Chain A, domain 1"/>
    <property type="match status" value="1"/>
</dbReference>
<dbReference type="Gene3D" id="1.10.840.10">
    <property type="entry name" value="Ras guanine-nucleotide exchange factors catalytic domain"/>
    <property type="match status" value="1"/>
</dbReference>
<dbReference type="Gene3D" id="1.20.870.10">
    <property type="entry name" value="Son of sevenless (SoS) protein Chain: S domain 1"/>
    <property type="match status" value="1"/>
</dbReference>
<dbReference type="InterPro" id="IPR000159">
    <property type="entry name" value="RA_dom"/>
</dbReference>
<dbReference type="InterPro" id="IPR008937">
    <property type="entry name" value="Ras-like_GEF"/>
</dbReference>
<dbReference type="InterPro" id="IPR000651">
    <property type="entry name" value="Ras-like_Gua-exchang_fac_N"/>
</dbReference>
<dbReference type="InterPro" id="IPR019804">
    <property type="entry name" value="Ras_G-nucl-exch_fac_CS"/>
</dbReference>
<dbReference type="InterPro" id="IPR023578">
    <property type="entry name" value="Ras_GEF_dom_sf"/>
</dbReference>
<dbReference type="InterPro" id="IPR001895">
    <property type="entry name" value="RASGEF_cat_dom"/>
</dbReference>
<dbReference type="InterPro" id="IPR036964">
    <property type="entry name" value="RASGEF_cat_dom_sf"/>
</dbReference>
<dbReference type="InterPro" id="IPR030748">
    <property type="entry name" value="RGL1_RA"/>
</dbReference>
<dbReference type="InterPro" id="IPR029071">
    <property type="entry name" value="Ubiquitin-like_domsf"/>
</dbReference>
<dbReference type="PANTHER" id="PTHR23113">
    <property type="entry name" value="GUANINE NUCLEOTIDE EXCHANGE FACTOR"/>
    <property type="match status" value="1"/>
</dbReference>
<dbReference type="PANTHER" id="PTHR23113:SF199">
    <property type="entry name" value="RAL GUANINE NUCLEOTIDE DISSOCIATION STIMULATOR-LIKE 1"/>
    <property type="match status" value="1"/>
</dbReference>
<dbReference type="Pfam" id="PF00788">
    <property type="entry name" value="RA"/>
    <property type="match status" value="1"/>
</dbReference>
<dbReference type="Pfam" id="PF00617">
    <property type="entry name" value="RasGEF"/>
    <property type="match status" value="1"/>
</dbReference>
<dbReference type="Pfam" id="PF00618">
    <property type="entry name" value="RasGEF_N"/>
    <property type="match status" value="1"/>
</dbReference>
<dbReference type="SMART" id="SM00314">
    <property type="entry name" value="RA"/>
    <property type="match status" value="1"/>
</dbReference>
<dbReference type="SMART" id="SM00147">
    <property type="entry name" value="RasGEF"/>
    <property type="match status" value="1"/>
</dbReference>
<dbReference type="SMART" id="SM00229">
    <property type="entry name" value="RasGEFN"/>
    <property type="match status" value="1"/>
</dbReference>
<dbReference type="SUPFAM" id="SSF48366">
    <property type="entry name" value="Ras GEF"/>
    <property type="match status" value="1"/>
</dbReference>
<dbReference type="SUPFAM" id="SSF54236">
    <property type="entry name" value="Ubiquitin-like"/>
    <property type="match status" value="1"/>
</dbReference>
<dbReference type="PROSITE" id="PS50200">
    <property type="entry name" value="RA"/>
    <property type="match status" value="1"/>
</dbReference>
<dbReference type="PROSITE" id="PS00720">
    <property type="entry name" value="RASGEF"/>
    <property type="match status" value="1"/>
</dbReference>
<dbReference type="PROSITE" id="PS50009">
    <property type="entry name" value="RASGEF_CAT"/>
    <property type="match status" value="1"/>
</dbReference>
<dbReference type="PROSITE" id="PS50212">
    <property type="entry name" value="RASGEF_NTER"/>
    <property type="match status" value="1"/>
</dbReference>